<sequence>MSEKVESKGLADAARDHLAAELARLRQRRDRLEVEVKNDRGMIGDHGDAAEAIQRADELAILGDRINELDRRLRTGPTPWSGSETLPGGTEVTLRFPDGEVVTMHVISVVEETPVGREAETLTARSPLGQALAGHQPGDTVTYSTPQGPNQVQLLAVKLPS</sequence>
<organism>
    <name type="scientific">Mycobacterium bovis (strain ATCC BAA-935 / AF2122/97)</name>
    <dbReference type="NCBI Taxonomy" id="233413"/>
    <lineage>
        <taxon>Bacteria</taxon>
        <taxon>Bacillati</taxon>
        <taxon>Actinomycetota</taxon>
        <taxon>Actinomycetes</taxon>
        <taxon>Mycobacteriales</taxon>
        <taxon>Mycobacteriaceae</taxon>
        <taxon>Mycobacterium</taxon>
        <taxon>Mycobacterium tuberculosis complex</taxon>
    </lineage>
</organism>
<accession>P65096</accession>
<accession>A0A1R3Y5J5</accession>
<accession>P72054</accession>
<accession>X2BPE5</accession>
<feature type="chain" id="PRO_0000104151" description="Uncharacterized protein Mb3817">
    <location>
        <begin position="1"/>
        <end position="161"/>
    </location>
</feature>
<gene>
    <name type="ordered locus">BQ2027_MB3817</name>
</gene>
<reference key="1">
    <citation type="journal article" date="2003" name="Proc. Natl. Acad. Sci. U.S.A.">
        <title>The complete genome sequence of Mycobacterium bovis.</title>
        <authorList>
            <person name="Garnier T."/>
            <person name="Eiglmeier K."/>
            <person name="Camus J.-C."/>
            <person name="Medina N."/>
            <person name="Mansoor H."/>
            <person name="Pryor M."/>
            <person name="Duthoy S."/>
            <person name="Grondin S."/>
            <person name="Lacroix C."/>
            <person name="Monsempe C."/>
            <person name="Simon S."/>
            <person name="Harris B."/>
            <person name="Atkin R."/>
            <person name="Doggett J."/>
            <person name="Mayes R."/>
            <person name="Keating L."/>
            <person name="Wheeler P.R."/>
            <person name="Parkhill J."/>
            <person name="Barrell B.G."/>
            <person name="Cole S.T."/>
            <person name="Gordon S.V."/>
            <person name="Hewinson R.G."/>
        </authorList>
    </citation>
    <scope>NUCLEOTIDE SEQUENCE [LARGE SCALE GENOMIC DNA]</scope>
    <source>
        <strain>ATCC BAA-935 / AF2122/97</strain>
    </source>
</reference>
<reference key="2">
    <citation type="journal article" date="2017" name="Genome Announc.">
        <title>Updated reference genome sequence and annotation of Mycobacterium bovis AF2122/97.</title>
        <authorList>
            <person name="Malone K.M."/>
            <person name="Farrell D."/>
            <person name="Stuber T.P."/>
            <person name="Schubert O.T."/>
            <person name="Aebersold R."/>
            <person name="Robbe-Austerman S."/>
            <person name="Gordon S.V."/>
        </authorList>
    </citation>
    <scope>NUCLEOTIDE SEQUENCE [LARGE SCALE GENOMIC DNA]</scope>
    <scope>GENOME REANNOTATION</scope>
    <source>
        <strain>ATCC BAA-935 / AF2122/97</strain>
    </source>
</reference>
<protein>
    <recommendedName>
        <fullName>Uncharacterized protein Mb3817</fullName>
    </recommendedName>
</protein>
<keyword id="KW-1185">Reference proteome</keyword>
<dbReference type="EMBL" id="LT708304">
    <property type="protein sequence ID" value="SIU02446.1"/>
    <property type="molecule type" value="Genomic_DNA"/>
</dbReference>
<dbReference type="RefSeq" id="NP_857454.1">
    <property type="nucleotide sequence ID" value="NC_002945.3"/>
</dbReference>
<dbReference type="RefSeq" id="WP_003420624.1">
    <property type="nucleotide sequence ID" value="NC_002945.4"/>
</dbReference>
<dbReference type="SMR" id="P65096"/>
<dbReference type="KEGG" id="mbo:BQ2027_MB3817"/>
<dbReference type="PATRIC" id="fig|233413.5.peg.4174"/>
<dbReference type="Proteomes" id="UP000001419">
    <property type="component" value="Chromosome"/>
</dbReference>
<dbReference type="GO" id="GO:0003677">
    <property type="term" value="F:DNA binding"/>
    <property type="evidence" value="ECO:0007669"/>
    <property type="project" value="InterPro"/>
</dbReference>
<dbReference type="GO" id="GO:0070063">
    <property type="term" value="F:RNA polymerase binding"/>
    <property type="evidence" value="ECO:0007669"/>
    <property type="project" value="InterPro"/>
</dbReference>
<dbReference type="GO" id="GO:0006354">
    <property type="term" value="P:DNA-templated transcription elongation"/>
    <property type="evidence" value="ECO:0007669"/>
    <property type="project" value="TreeGrafter"/>
</dbReference>
<dbReference type="GO" id="GO:0032784">
    <property type="term" value="P:regulation of DNA-templated transcription elongation"/>
    <property type="evidence" value="ECO:0007669"/>
    <property type="project" value="InterPro"/>
</dbReference>
<dbReference type="FunFam" id="3.10.50.30:FF:000006">
    <property type="entry name" value="Nucleoside diphosphate kinase regulator"/>
    <property type="match status" value="1"/>
</dbReference>
<dbReference type="Gene3D" id="3.10.50.30">
    <property type="entry name" value="Transcription elongation factor, GreA/GreB, C-terminal domain"/>
    <property type="match status" value="1"/>
</dbReference>
<dbReference type="InterPro" id="IPR036953">
    <property type="entry name" value="GreA/GreB_C_sf"/>
</dbReference>
<dbReference type="InterPro" id="IPR001437">
    <property type="entry name" value="Tscrpt_elong_fac_GreA/B_C"/>
</dbReference>
<dbReference type="InterPro" id="IPR023459">
    <property type="entry name" value="Tscrpt_elong_fac_GreA/B_fam"/>
</dbReference>
<dbReference type="NCBIfam" id="NF004548">
    <property type="entry name" value="PRK05892.1"/>
    <property type="match status" value="1"/>
</dbReference>
<dbReference type="PANTHER" id="PTHR30437">
    <property type="entry name" value="TRANSCRIPTION ELONGATION FACTOR GREA"/>
    <property type="match status" value="1"/>
</dbReference>
<dbReference type="PANTHER" id="PTHR30437:SF4">
    <property type="entry name" value="TRANSCRIPTION ELONGATION FACTOR GREA"/>
    <property type="match status" value="1"/>
</dbReference>
<dbReference type="Pfam" id="PF01272">
    <property type="entry name" value="GreA_GreB"/>
    <property type="match status" value="1"/>
</dbReference>
<dbReference type="PIRSF" id="PIRSF006092">
    <property type="entry name" value="GreA_GreB"/>
    <property type="match status" value="1"/>
</dbReference>
<dbReference type="SUPFAM" id="SSF54534">
    <property type="entry name" value="FKBP-like"/>
    <property type="match status" value="1"/>
</dbReference>
<proteinExistence type="predicted"/>
<name>Y3817_MYCBO</name>